<evidence type="ECO:0000256" key="1">
    <source>
        <dbReference type="SAM" id="MobiDB-lite"/>
    </source>
</evidence>
<sequence>MKQVAGFIGMSQKNKGIQQNQWHSGPPQGLLSGQTKAEQGTSSQQAGVNQGENSKSGAVVQRKMPMRRDVNSAAQRQHVRRLVYTPYFPNETWNISTFKNGAKDVERSVISTLNNVAENRVMDNCTSRVIFEMTQIQFESLPDIIRNEFTRVGDDALKWAVPEDLKSADLDHMMVVKLSTEGTIYPTTLIFPGGCSGMAKLKSVYSFLESQLERIVTPTPSVSLKYVTSWAEHLFDLCSGQLINSQNERVDKLLGYMIWDIEKAITLTDQVIACYNHPEVVLRRLGASDIACAVLAGESVVKLTRLALSKSPVDGCSCCRILELILNLPSRKPNDKVPQVPLDILFASVYRYVSAMCMGRVLNGRIDASGIQSTDHATASIKLNDIIVNDLELRSMGVDKTSSFRGTQSMRAFYVPENLAGSILDRINVLVMRHFGILHMWGFNGVVLQNQEGYCDYHIITGLNHLTTITHTNSMVAVHWGTESRMDNIFEIKARTLPTASETMITLIENALKEQLTSIVKDGLRKGVSFSVKRNINDSRFGFETNSSPAIFLKLRDMLKRAKPFSDLLSLALSKVIKKENAMIQRSITTVEVAVAIKMKVYGLDEYVSLMKVEKKEVESGSLPLQEFLKLKSNAAGAQSSTVAVKMKEEEVNSKAYCLISETIVVNMDAVRSACGVVQSENLVIKSELSGPELSESVTSGLMELLGRNAGPSKSWADQVEEAENEEEKQKE</sequence>
<dbReference type="EMBL" id="M24117">
    <property type="protein sequence ID" value="AAA48506.1"/>
    <property type="molecule type" value="Genomic_RNA"/>
</dbReference>
<dbReference type="PIR" id="A32442">
    <property type="entry name" value="MNXRW4"/>
</dbReference>
<dbReference type="RefSeq" id="YP_009508273.1">
    <property type="nucleotide sequence ID" value="NC_038945.1"/>
</dbReference>
<dbReference type="GeneID" id="37619678"/>
<dbReference type="Proteomes" id="UP000242823">
    <property type="component" value="Genome"/>
</dbReference>
<feature type="chain" id="PRO_0000222762" description="Non-structural protein 4">
    <location>
        <begin position="1"/>
        <end position="732"/>
    </location>
</feature>
<feature type="region of interest" description="Disordered" evidence="1">
    <location>
        <begin position="13"/>
        <end position="74"/>
    </location>
</feature>
<feature type="region of interest" description="Disordered" evidence="1">
    <location>
        <begin position="706"/>
        <end position="732"/>
    </location>
</feature>
<feature type="compositionally biased region" description="Polar residues" evidence="1">
    <location>
        <begin position="13"/>
        <end position="23"/>
    </location>
</feature>
<feature type="compositionally biased region" description="Polar residues" evidence="1">
    <location>
        <begin position="31"/>
        <end position="56"/>
    </location>
</feature>
<feature type="compositionally biased region" description="Acidic residues" evidence="1">
    <location>
        <begin position="719"/>
        <end position="732"/>
    </location>
</feature>
<protein>
    <recommendedName>
        <fullName>Non-structural protein 4</fullName>
        <shortName>Pns4</shortName>
    </recommendedName>
</protein>
<organismHost>
    <name type="scientific">Catharanthus roseus</name>
    <name type="common">Madagascar periwinkle</name>
    <name type="synonym">Vinca rosea</name>
    <dbReference type="NCBI Taxonomy" id="4058"/>
</organismHost>
<organismHost>
    <name type="scientific">Melilotus officinalis</name>
    <name type="common">Yellow sweet clover</name>
    <name type="synonym">Trifolium officinale</name>
    <dbReference type="NCBI Taxonomy" id="47083"/>
</organismHost>
<organismHost>
    <name type="scientific">Trifolium incarnatum</name>
    <name type="common">Crimson clover</name>
    <dbReference type="NCBI Taxonomy" id="60916"/>
</organismHost>
<name>NSP4_WTV</name>
<reference key="1">
    <citation type="journal article" date="1989" name="Virology">
        <title>Complete nucleotide sequence of wound tumor virus genomic segments encoding nonstructural polypeptides.</title>
        <authorList>
            <person name="Anzola J.V."/>
            <person name="Dall D.J."/>
            <person name="Xu Z."/>
            <person name="Nuss D.L."/>
        </authorList>
    </citation>
    <scope>NUCLEOTIDE SEQUENCE [GENOMIC RNA]</scope>
</reference>
<proteinExistence type="predicted"/>
<accession>P13091</accession>
<organism>
    <name type="scientific">Wound tumor virus</name>
    <name type="common">WTV</name>
    <dbReference type="NCBI Taxonomy" id="10987"/>
    <lineage>
        <taxon>Viruses</taxon>
        <taxon>Riboviria</taxon>
        <taxon>Orthornavirae</taxon>
        <taxon>Duplornaviricota</taxon>
        <taxon>Resentoviricetes</taxon>
        <taxon>Reovirales</taxon>
        <taxon>Sedoreoviridae</taxon>
        <taxon>Phytoreovirus</taxon>
    </lineage>
</organism>